<feature type="chain" id="PRO_0000284834" description="Small G protein signaling modulator 1">
    <location>
        <begin position="1"/>
        <end position="1093"/>
    </location>
</feature>
<feature type="domain" description="RUN" evidence="4">
    <location>
        <begin position="36"/>
        <end position="190"/>
    </location>
</feature>
<feature type="domain" description="Rab-GAP TBC" evidence="3">
    <location>
        <begin position="562"/>
        <end position="1026"/>
    </location>
</feature>
<feature type="region of interest" description="Important for interaction with RAB9A and RAB9B" evidence="7">
    <location>
        <begin position="256"/>
        <end position="297"/>
    </location>
</feature>
<feature type="region of interest" description="Required for interaction with RAP family members" evidence="1">
    <location>
        <begin position="301"/>
        <end position="350"/>
    </location>
</feature>
<feature type="region of interest" description="Disordered" evidence="5">
    <location>
        <begin position="377"/>
        <end position="412"/>
    </location>
</feature>
<feature type="region of interest" description="Disordered" evidence="5">
    <location>
        <begin position="645"/>
        <end position="778"/>
    </location>
</feature>
<feature type="region of interest" description="Disordered" evidence="5">
    <location>
        <begin position="810"/>
        <end position="838"/>
    </location>
</feature>
<feature type="compositionally biased region" description="Basic residues" evidence="5">
    <location>
        <begin position="385"/>
        <end position="397"/>
    </location>
</feature>
<feature type="compositionally biased region" description="Polar residues" evidence="5">
    <location>
        <begin position="647"/>
        <end position="676"/>
    </location>
</feature>
<feature type="compositionally biased region" description="Basic and acidic residues" evidence="5">
    <location>
        <begin position="687"/>
        <end position="696"/>
    </location>
</feature>
<feature type="compositionally biased region" description="Polar residues" evidence="5">
    <location>
        <begin position="702"/>
        <end position="736"/>
    </location>
</feature>
<feature type="compositionally biased region" description="Basic and acidic residues" evidence="5">
    <location>
        <begin position="766"/>
        <end position="776"/>
    </location>
</feature>
<feature type="compositionally biased region" description="Basic and acidic residues" evidence="5">
    <location>
        <begin position="820"/>
        <end position="829"/>
    </location>
</feature>
<feature type="splice variant" id="VSP_024669" description="In isoform 2." evidence="8">
    <location>
        <begin position="1"/>
        <end position="287"/>
    </location>
</feature>
<feature type="splice variant" id="VSP_024670" description="In isoform 2." evidence="8">
    <original>TLKWTPNQLMNGSVGDLDYEK</original>
    <variation>MLGQVGLGDLWLPTVSLTSPS</variation>
    <location>
        <begin position="288"/>
        <end position="308"/>
    </location>
</feature>
<feature type="mutagenesis site" description="Abolishes interaction with RAB9A." evidence="7">
    <original>L</original>
    <variation>A</variation>
    <location>
        <position position="256"/>
    </location>
</feature>
<feature type="mutagenesis site" description="Abolishes interaction with RAB9A." evidence="7">
    <original>K</original>
    <variation>A</variation>
    <location>
        <position position="260"/>
    </location>
</feature>
<feature type="mutagenesis site" description="Abolishes interaction with RAB9A." evidence="7">
    <original>N</original>
    <variation>A</variation>
    <location>
        <position position="261"/>
    </location>
</feature>
<feature type="mutagenesis site" description="Mildly impaired interaction with RAB9A." evidence="7">
    <original>N</original>
    <variation>A</variation>
    <location>
        <position position="262"/>
    </location>
</feature>
<feature type="mutagenesis site" description="Abolishes interaction with RAB9A." evidence="7">
    <original>Y</original>
    <variation>A</variation>
    <location>
        <position position="277"/>
    </location>
</feature>
<feature type="mutagenesis site" description="Abolishes interaction with RAB9A." evidence="7">
    <original>N</original>
    <variation>A</variation>
    <location>
        <position position="294"/>
    </location>
</feature>
<feature type="mutagenesis site" description="Abolishes interaction with RAB9A." evidence="7">
    <original>M</original>
    <variation>A</variation>
    <location>
        <position position="297"/>
    </location>
</feature>
<feature type="sequence conflict" description="In Ref. 1; BAE39683." evidence="9" ref="1">
    <original>E</original>
    <variation>V</variation>
    <location>
        <position position="321"/>
    </location>
</feature>
<feature type="sequence conflict" description="In Ref. 1; BAC35428." evidence="9" ref="1">
    <original>P</original>
    <variation>T</variation>
    <location>
        <position position="550"/>
    </location>
</feature>
<feature type="strand" evidence="10">
    <location>
        <begin position="255"/>
        <end position="265"/>
    </location>
</feature>
<feature type="strand" evidence="10">
    <location>
        <begin position="267"/>
        <end position="271"/>
    </location>
</feature>
<feature type="strand" evidence="10">
    <location>
        <begin position="274"/>
        <end position="285"/>
    </location>
</feature>
<feature type="strand" evidence="10">
    <location>
        <begin position="287"/>
        <end position="293"/>
    </location>
</feature>
<feature type="helix" evidence="10">
    <location>
        <begin position="294"/>
        <end position="296"/>
    </location>
</feature>
<feature type="turn" evidence="10">
    <location>
        <begin position="297"/>
        <end position="299"/>
    </location>
</feature>
<feature type="turn" evidence="10">
    <location>
        <begin position="303"/>
        <end position="305"/>
    </location>
</feature>
<feature type="helix" evidence="10">
    <location>
        <begin position="306"/>
        <end position="308"/>
    </location>
</feature>
<feature type="helix" evidence="10">
    <location>
        <begin position="310"/>
        <end position="313"/>
    </location>
</feature>
<feature type="strand" evidence="10">
    <location>
        <begin position="316"/>
        <end position="319"/>
    </location>
</feature>
<feature type="helix" evidence="10">
    <location>
        <begin position="320"/>
        <end position="322"/>
    </location>
</feature>
<feature type="strand" evidence="10">
    <location>
        <begin position="323"/>
        <end position="329"/>
    </location>
</feature>
<feature type="strand" evidence="10">
    <location>
        <begin position="337"/>
        <end position="342"/>
    </location>
</feature>
<feature type="strand" evidence="10">
    <location>
        <begin position="355"/>
        <end position="357"/>
    </location>
</feature>
<feature type="helix" evidence="10">
    <location>
        <begin position="358"/>
        <end position="370"/>
    </location>
</feature>
<feature type="turn" evidence="10">
    <location>
        <begin position="371"/>
        <end position="373"/>
    </location>
</feature>
<feature type="strand" evidence="10">
    <location>
        <begin position="375"/>
        <end position="378"/>
    </location>
</feature>
<feature type="helix" evidence="10">
    <location>
        <begin position="384"/>
        <end position="386"/>
    </location>
</feature>
<feature type="strand" evidence="10">
    <location>
        <begin position="416"/>
        <end position="422"/>
    </location>
</feature>
<reference key="1">
    <citation type="journal article" date="2005" name="Science">
        <title>The transcriptional landscape of the mammalian genome.</title>
        <authorList>
            <person name="Carninci P."/>
            <person name="Kasukawa T."/>
            <person name="Katayama S."/>
            <person name="Gough J."/>
            <person name="Frith M.C."/>
            <person name="Maeda N."/>
            <person name="Oyama R."/>
            <person name="Ravasi T."/>
            <person name="Lenhard B."/>
            <person name="Wells C."/>
            <person name="Kodzius R."/>
            <person name="Shimokawa K."/>
            <person name="Bajic V.B."/>
            <person name="Brenner S.E."/>
            <person name="Batalov S."/>
            <person name="Forrest A.R."/>
            <person name="Zavolan M."/>
            <person name="Davis M.J."/>
            <person name="Wilming L.G."/>
            <person name="Aidinis V."/>
            <person name="Allen J.E."/>
            <person name="Ambesi-Impiombato A."/>
            <person name="Apweiler R."/>
            <person name="Aturaliya R.N."/>
            <person name="Bailey T.L."/>
            <person name="Bansal M."/>
            <person name="Baxter L."/>
            <person name="Beisel K.W."/>
            <person name="Bersano T."/>
            <person name="Bono H."/>
            <person name="Chalk A.M."/>
            <person name="Chiu K.P."/>
            <person name="Choudhary V."/>
            <person name="Christoffels A."/>
            <person name="Clutterbuck D.R."/>
            <person name="Crowe M.L."/>
            <person name="Dalla E."/>
            <person name="Dalrymple B.P."/>
            <person name="de Bono B."/>
            <person name="Della Gatta G."/>
            <person name="di Bernardo D."/>
            <person name="Down T."/>
            <person name="Engstrom P."/>
            <person name="Fagiolini M."/>
            <person name="Faulkner G."/>
            <person name="Fletcher C.F."/>
            <person name="Fukushima T."/>
            <person name="Furuno M."/>
            <person name="Futaki S."/>
            <person name="Gariboldi M."/>
            <person name="Georgii-Hemming P."/>
            <person name="Gingeras T.R."/>
            <person name="Gojobori T."/>
            <person name="Green R.E."/>
            <person name="Gustincich S."/>
            <person name="Harbers M."/>
            <person name="Hayashi Y."/>
            <person name="Hensch T.K."/>
            <person name="Hirokawa N."/>
            <person name="Hill D."/>
            <person name="Huminiecki L."/>
            <person name="Iacono M."/>
            <person name="Ikeo K."/>
            <person name="Iwama A."/>
            <person name="Ishikawa T."/>
            <person name="Jakt M."/>
            <person name="Kanapin A."/>
            <person name="Katoh M."/>
            <person name="Kawasawa Y."/>
            <person name="Kelso J."/>
            <person name="Kitamura H."/>
            <person name="Kitano H."/>
            <person name="Kollias G."/>
            <person name="Krishnan S.P."/>
            <person name="Kruger A."/>
            <person name="Kummerfeld S.K."/>
            <person name="Kurochkin I.V."/>
            <person name="Lareau L.F."/>
            <person name="Lazarevic D."/>
            <person name="Lipovich L."/>
            <person name="Liu J."/>
            <person name="Liuni S."/>
            <person name="McWilliam S."/>
            <person name="Madan Babu M."/>
            <person name="Madera M."/>
            <person name="Marchionni L."/>
            <person name="Matsuda H."/>
            <person name="Matsuzawa S."/>
            <person name="Miki H."/>
            <person name="Mignone F."/>
            <person name="Miyake S."/>
            <person name="Morris K."/>
            <person name="Mottagui-Tabar S."/>
            <person name="Mulder N."/>
            <person name="Nakano N."/>
            <person name="Nakauchi H."/>
            <person name="Ng P."/>
            <person name="Nilsson R."/>
            <person name="Nishiguchi S."/>
            <person name="Nishikawa S."/>
            <person name="Nori F."/>
            <person name="Ohara O."/>
            <person name="Okazaki Y."/>
            <person name="Orlando V."/>
            <person name="Pang K.C."/>
            <person name="Pavan W.J."/>
            <person name="Pavesi G."/>
            <person name="Pesole G."/>
            <person name="Petrovsky N."/>
            <person name="Piazza S."/>
            <person name="Reed J."/>
            <person name="Reid J.F."/>
            <person name="Ring B.Z."/>
            <person name="Ringwald M."/>
            <person name="Rost B."/>
            <person name="Ruan Y."/>
            <person name="Salzberg S.L."/>
            <person name="Sandelin A."/>
            <person name="Schneider C."/>
            <person name="Schoenbach C."/>
            <person name="Sekiguchi K."/>
            <person name="Semple C.A."/>
            <person name="Seno S."/>
            <person name="Sessa L."/>
            <person name="Sheng Y."/>
            <person name="Shibata Y."/>
            <person name="Shimada H."/>
            <person name="Shimada K."/>
            <person name="Silva D."/>
            <person name="Sinclair B."/>
            <person name="Sperling S."/>
            <person name="Stupka E."/>
            <person name="Sugiura K."/>
            <person name="Sultana R."/>
            <person name="Takenaka Y."/>
            <person name="Taki K."/>
            <person name="Tammoja K."/>
            <person name="Tan S.L."/>
            <person name="Tang S."/>
            <person name="Taylor M.S."/>
            <person name="Tegner J."/>
            <person name="Teichmann S.A."/>
            <person name="Ueda H.R."/>
            <person name="van Nimwegen E."/>
            <person name="Verardo R."/>
            <person name="Wei C.L."/>
            <person name="Yagi K."/>
            <person name="Yamanishi H."/>
            <person name="Zabarovsky E."/>
            <person name="Zhu S."/>
            <person name="Zimmer A."/>
            <person name="Hide W."/>
            <person name="Bult C."/>
            <person name="Grimmond S.M."/>
            <person name="Teasdale R.D."/>
            <person name="Liu E.T."/>
            <person name="Brusic V."/>
            <person name="Quackenbush J."/>
            <person name="Wahlestedt C."/>
            <person name="Mattick J.S."/>
            <person name="Hume D.A."/>
            <person name="Kai C."/>
            <person name="Sasaki D."/>
            <person name="Tomaru Y."/>
            <person name="Fukuda S."/>
            <person name="Kanamori-Katayama M."/>
            <person name="Suzuki M."/>
            <person name="Aoki J."/>
            <person name="Arakawa T."/>
            <person name="Iida J."/>
            <person name="Imamura K."/>
            <person name="Itoh M."/>
            <person name="Kato T."/>
            <person name="Kawaji H."/>
            <person name="Kawagashira N."/>
            <person name="Kawashima T."/>
            <person name="Kojima M."/>
            <person name="Kondo S."/>
            <person name="Konno H."/>
            <person name="Nakano K."/>
            <person name="Ninomiya N."/>
            <person name="Nishio T."/>
            <person name="Okada M."/>
            <person name="Plessy C."/>
            <person name="Shibata K."/>
            <person name="Shiraki T."/>
            <person name="Suzuki S."/>
            <person name="Tagami M."/>
            <person name="Waki K."/>
            <person name="Watahiki A."/>
            <person name="Okamura-Oho Y."/>
            <person name="Suzuki H."/>
            <person name="Kawai J."/>
            <person name="Hayashizaki Y."/>
        </authorList>
    </citation>
    <scope>NUCLEOTIDE SEQUENCE [LARGE SCALE MRNA] (ISOFORMS 1 AND 2)</scope>
    <source>
        <strain>C57BL/6J</strain>
        <tissue>Eye</tissue>
        <tissue>Placenta</tissue>
    </source>
</reference>
<reference key="2">
    <citation type="journal article" date="2007" name="Genomics">
        <title>Identification of three novel proteins (SGSM1, 2, 3) which modulate small G protein (RAP and RAB)-mediated signaling pathway.</title>
        <authorList>
            <person name="Yang H."/>
            <person name="Sasaki T."/>
            <person name="Minoshima S."/>
            <person name="Shimizu N."/>
        </authorList>
    </citation>
    <scope>SUBCELLULAR LOCATION</scope>
    <scope>TISSUE SPECIFICITY</scope>
</reference>
<reference key="3">
    <citation type="journal article" date="2010" name="Cell">
        <title>A tissue-specific atlas of mouse protein phosphorylation and expression.</title>
        <authorList>
            <person name="Huttlin E.L."/>
            <person name="Jedrychowski M.P."/>
            <person name="Elias J.E."/>
            <person name="Goswami T."/>
            <person name="Rad R."/>
            <person name="Beausoleil S.A."/>
            <person name="Villen J."/>
            <person name="Haas W."/>
            <person name="Sowa M.E."/>
            <person name="Gygi S.P."/>
        </authorList>
    </citation>
    <scope>IDENTIFICATION BY MASS SPECTROMETRY [LARGE SCALE ANALYSIS]</scope>
    <source>
        <tissue>Brain</tissue>
    </source>
</reference>
<reference key="4">
    <citation type="journal article" date="2014" name="Structure">
        <title>Crystal structure of the Rab9A-RUTBC2 RBD complex reveals the molecular basis for the binding specificity of Rab9A with RUTBC2.</title>
        <authorList>
            <person name="Zhang Z."/>
            <person name="Wang S."/>
            <person name="Shen T."/>
            <person name="Chen J."/>
            <person name="Ding J."/>
        </authorList>
    </citation>
    <scope>X-RAY CRYSTALLOGRAPHY (2.30 ANGSTROMS) OF 254-425 IN COMPLEX WITH RAB9A</scope>
    <scope>INTERACTION WITH RAB9A AND RAB9B</scope>
    <scope>SUBCELLULAR LOCATION</scope>
    <scope>MUTAGENESIS OF LEU-256; LYS-260; ASN-261; ASN-262; TYR-277; ASN-294 AND MET-297</scope>
</reference>
<gene>
    <name type="primary">Sgsm1</name>
    <name type="synonym">Rutbc2</name>
</gene>
<organism>
    <name type="scientific">Mus musculus</name>
    <name type="common">Mouse</name>
    <dbReference type="NCBI Taxonomy" id="10090"/>
    <lineage>
        <taxon>Eukaryota</taxon>
        <taxon>Metazoa</taxon>
        <taxon>Chordata</taxon>
        <taxon>Craniata</taxon>
        <taxon>Vertebrata</taxon>
        <taxon>Euteleostomi</taxon>
        <taxon>Mammalia</taxon>
        <taxon>Eutheria</taxon>
        <taxon>Euarchontoglires</taxon>
        <taxon>Glires</taxon>
        <taxon>Rodentia</taxon>
        <taxon>Myomorpha</taxon>
        <taxon>Muroidea</taxon>
        <taxon>Muridae</taxon>
        <taxon>Murinae</taxon>
        <taxon>Mus</taxon>
        <taxon>Mus</taxon>
    </lineage>
</organism>
<sequence length="1093" mass="123196">MASVPAEAETRQRLLRTVKKEVKQIMEEAVTRKFVHEDSSHIISFCAAVEACVLHGLRRRAAGFLRSNKIAALFMKVGKGFPPAEELSRKVQELEQLIESARNQIQGLQENVRKLPKLPNLSPLAIKHLWIRTALFGRVLDKIVHYLVENSSKYYEKEALLMDPVDGPILASLLVGPCALEYTKMKTADHFWTDPSADELVQRHRIHSSHLRQDSPTKRPALCIQKRHSSGSMDDRPSISARDYVESLHQDSRATLLYGKNNVLVQPRDDMEAVPGYLSLHQTADVMTLKWTPNQLMNGSVGDLDYEKSVYWDYAVTIRLEEIVYLHCHQQVDSGGTVVLVSQDGIQRPPFRFPKGGHLLQFLSCLENGLLPHGQLDPPLWSQRGKGKVFPKLRKRSPQGSSESTSSDKEDDEATDYVFRIIYPGTQSEFVPQDLMDVSMNNLPPLWQPSPRKSSCSSCSQSGSADGGSTNGCNHERAPLKLLCDNMKYQILSRAFYGWLAYCRHLSTVRTHLSALVNHMIVSPDLPCDAGQGLTASIWEKYIQDSTTYPEQELLRLIYYGGVQPEIRRAVWPFLLGHYQFGMTEMERKEVDEQIHACYAQTMSEWLGCEAIVRQRERESHAAALAKCSSGASLDSHLHRMLHRDSTISNESSQSCSSGRQNLRLQSDSSSSTQVFESVDEVEQTEAEGRSEEKHPKIPNGNPANGTCSPDSGHPSSHNFSSGLSEHSEPSLSTEDSVLDAQRSLPAVFRPGDSSVEDGQSSEATTSRDEAPREELAVQDSLESDLLANESLEEFMSIPGSLDVALPEKDGAVMDGWPGEADKPSRADSEDNLSEEPEMESLFPALASLAVTSSANNEASPVSSSGVTYSPELLDLYTVNLHRIEKDVQRCDRSYWYFTAANLEKLRNIMCSYIWQHIEIGYVQGMCDLLAPLLVILDDEALAFSCFTELMKRMNQNFPHGGAMDTHFANMRSLIQILDSELFELMHQNGDYTHFYFCYRWFLLDFKRELVYDDVFSVWETIWAAKHVSSAHYVLFIALALVEVYRDIILENNMDFTDIIKFFNEMAERHNAKQILQLARDLVHKVQILIENK</sequence>
<protein>
    <recommendedName>
        <fullName>Small G protein signaling modulator 1</fullName>
    </recommendedName>
    <alternativeName>
        <fullName>RUN and TBC1 domain-containing protein 2</fullName>
    </alternativeName>
</protein>
<proteinExistence type="evidence at protein level"/>
<keyword id="KW-0002">3D-structure</keyword>
<keyword id="KW-0025">Alternative splicing</keyword>
<keyword id="KW-0963">Cytoplasm</keyword>
<keyword id="KW-0968">Cytoplasmic vesicle</keyword>
<keyword id="KW-0333">Golgi apparatus</keyword>
<keyword id="KW-0343">GTPase activation</keyword>
<keyword id="KW-0472">Membrane</keyword>
<keyword id="KW-1185">Reference proteome</keyword>
<evidence type="ECO:0000250" key="1"/>
<evidence type="ECO:0000250" key="2">
    <source>
        <dbReference type="UniProtKB" id="Q2NKQ1"/>
    </source>
</evidence>
<evidence type="ECO:0000255" key="3">
    <source>
        <dbReference type="PROSITE-ProRule" id="PRU00163"/>
    </source>
</evidence>
<evidence type="ECO:0000255" key="4">
    <source>
        <dbReference type="PROSITE-ProRule" id="PRU00178"/>
    </source>
</evidence>
<evidence type="ECO:0000256" key="5">
    <source>
        <dbReference type="SAM" id="MobiDB-lite"/>
    </source>
</evidence>
<evidence type="ECO:0000269" key="6">
    <source>
    </source>
</evidence>
<evidence type="ECO:0000269" key="7">
    <source>
    </source>
</evidence>
<evidence type="ECO:0000303" key="8">
    <source>
    </source>
</evidence>
<evidence type="ECO:0000305" key="9"/>
<evidence type="ECO:0007829" key="10">
    <source>
        <dbReference type="PDB" id="4QXA"/>
    </source>
</evidence>
<name>SGSM1_MOUSE</name>
<accession>Q8BPQ7</accession>
<accession>Q3TJ12</accession>
<dbReference type="EMBL" id="AK053555">
    <property type="protein sequence ID" value="BAC35428.1"/>
    <property type="molecule type" value="mRNA"/>
</dbReference>
<dbReference type="EMBL" id="AK167632">
    <property type="protein sequence ID" value="BAE39683.1"/>
    <property type="molecule type" value="mRNA"/>
</dbReference>
<dbReference type="CCDS" id="CCDS39218.1">
    <molecule id="Q8BPQ7-1"/>
</dbReference>
<dbReference type="CCDS" id="CCDS84935.1">
    <molecule id="Q8BPQ7-2"/>
</dbReference>
<dbReference type="RefSeq" id="NP_001156437.1">
    <property type="nucleotide sequence ID" value="NM_001162965.1"/>
</dbReference>
<dbReference type="RefSeq" id="NP_001296457.1">
    <molecule id="Q8BPQ7-2"/>
    <property type="nucleotide sequence ID" value="NM_001309528.1"/>
</dbReference>
<dbReference type="RefSeq" id="NP_766306.2">
    <property type="nucleotide sequence ID" value="NM_172718.3"/>
</dbReference>
<dbReference type="PDB" id="4QXA">
    <property type="method" value="X-ray"/>
    <property type="resolution" value="2.30 A"/>
    <property type="chains" value="B=254-425"/>
</dbReference>
<dbReference type="PDBsum" id="4QXA"/>
<dbReference type="SMR" id="Q8BPQ7"/>
<dbReference type="BioGRID" id="206853">
    <property type="interactions" value="2"/>
</dbReference>
<dbReference type="DIP" id="DIP-61070N"/>
<dbReference type="FunCoup" id="Q8BPQ7">
    <property type="interactions" value="732"/>
</dbReference>
<dbReference type="IntAct" id="Q8BPQ7">
    <property type="interactions" value="2"/>
</dbReference>
<dbReference type="STRING" id="10090.ENSMUSP00000046544"/>
<dbReference type="GlyGen" id="Q8BPQ7">
    <property type="glycosylation" value="1 site, 1 N-linked glycan (1 site)"/>
</dbReference>
<dbReference type="iPTMnet" id="Q8BPQ7"/>
<dbReference type="PhosphoSitePlus" id="Q8BPQ7"/>
<dbReference type="SwissPalm" id="Q8BPQ7"/>
<dbReference type="PaxDb" id="10090-ENSMUSP00000046544"/>
<dbReference type="PeptideAtlas" id="Q8BPQ7"/>
<dbReference type="ProteomicsDB" id="256989">
    <molecule id="Q8BPQ7-1"/>
</dbReference>
<dbReference type="ProteomicsDB" id="256990">
    <molecule id="Q8BPQ7-2"/>
</dbReference>
<dbReference type="Antibodypedia" id="308">
    <property type="antibodies" value="83 antibodies from 26 providers"/>
</dbReference>
<dbReference type="DNASU" id="52850"/>
<dbReference type="Ensembl" id="ENSMUST00000057209.12">
    <molecule id="Q8BPQ7-2"/>
    <property type="protein sequence ID" value="ENSMUSP00000084106.5"/>
    <property type="gene ID" value="ENSMUSG00000042216.14"/>
</dbReference>
<dbReference type="GeneID" id="52850"/>
<dbReference type="KEGG" id="mmu:52850"/>
<dbReference type="UCSC" id="uc008yuc.2">
    <molecule id="Q8BPQ7-2"/>
    <property type="organism name" value="mouse"/>
</dbReference>
<dbReference type="AGR" id="MGI:107320"/>
<dbReference type="CTD" id="129049"/>
<dbReference type="MGI" id="MGI:107320">
    <property type="gene designation" value="Sgsm1"/>
</dbReference>
<dbReference type="VEuPathDB" id="HostDB:ENSMUSG00000042216"/>
<dbReference type="eggNOG" id="KOG1648">
    <property type="taxonomic scope" value="Eukaryota"/>
</dbReference>
<dbReference type="GeneTree" id="ENSGT00940000156871"/>
<dbReference type="HOGENOM" id="CLU_006235_0_1_1"/>
<dbReference type="InParanoid" id="Q8BPQ7"/>
<dbReference type="OrthoDB" id="10264062at2759"/>
<dbReference type="PhylomeDB" id="Q8BPQ7"/>
<dbReference type="BioGRID-ORCS" id="52850">
    <property type="hits" value="3 hits in 77 CRISPR screens"/>
</dbReference>
<dbReference type="ChiTaRS" id="Sgsm1">
    <property type="organism name" value="mouse"/>
</dbReference>
<dbReference type="EvolutionaryTrace" id="Q8BPQ7"/>
<dbReference type="PRO" id="PR:Q8BPQ7"/>
<dbReference type="Proteomes" id="UP000000589">
    <property type="component" value="Chromosome 5"/>
</dbReference>
<dbReference type="RNAct" id="Q8BPQ7">
    <property type="molecule type" value="protein"/>
</dbReference>
<dbReference type="Bgee" id="ENSMUSG00000042216">
    <property type="expression patterns" value="Expressed in superior cervical ganglion and 152 other cell types or tissues"/>
</dbReference>
<dbReference type="ExpressionAtlas" id="Q8BPQ7">
    <property type="expression patterns" value="baseline and differential"/>
</dbReference>
<dbReference type="GO" id="GO:0005737">
    <property type="term" value="C:cytoplasm"/>
    <property type="evidence" value="ECO:0000314"/>
    <property type="project" value="UniProtKB"/>
</dbReference>
<dbReference type="GO" id="GO:0030659">
    <property type="term" value="C:cytoplasmic vesicle membrane"/>
    <property type="evidence" value="ECO:0000314"/>
    <property type="project" value="UniProtKB"/>
</dbReference>
<dbReference type="GO" id="GO:0005794">
    <property type="term" value="C:Golgi apparatus"/>
    <property type="evidence" value="ECO:0007669"/>
    <property type="project" value="UniProtKB-SubCell"/>
</dbReference>
<dbReference type="GO" id="GO:0005096">
    <property type="term" value="F:GTPase activator activity"/>
    <property type="evidence" value="ECO:0007669"/>
    <property type="project" value="UniProtKB-KW"/>
</dbReference>
<dbReference type="GO" id="GO:0031267">
    <property type="term" value="F:small GTPase binding"/>
    <property type="evidence" value="ECO:0000353"/>
    <property type="project" value="UniProtKB"/>
</dbReference>
<dbReference type="GO" id="GO:0045944">
    <property type="term" value="P:positive regulation of transcription by RNA polymerase II"/>
    <property type="evidence" value="ECO:0000314"/>
    <property type="project" value="MGI"/>
</dbReference>
<dbReference type="CDD" id="cd15784">
    <property type="entry name" value="PH_RUTBC"/>
    <property type="match status" value="1"/>
</dbReference>
<dbReference type="CDD" id="cd17703">
    <property type="entry name" value="RUN_SGSM1"/>
    <property type="match status" value="1"/>
</dbReference>
<dbReference type="FunFam" id="1.10.472.80:FF:000004">
    <property type="entry name" value="Small G protein signaling modulator 1"/>
    <property type="match status" value="1"/>
</dbReference>
<dbReference type="FunFam" id="1.20.58.900:FF:000002">
    <property type="entry name" value="small G protein signaling modulator 1"/>
    <property type="match status" value="1"/>
</dbReference>
<dbReference type="FunFam" id="1.10.8.270:FF:000006">
    <property type="entry name" value="Small G protein signaling modulator 2"/>
    <property type="match status" value="1"/>
</dbReference>
<dbReference type="FunFam" id="2.30.29.230:FF:000001">
    <property type="entry name" value="Small G protein signaling modulator 2"/>
    <property type="match status" value="1"/>
</dbReference>
<dbReference type="Gene3D" id="1.20.58.900">
    <property type="match status" value="1"/>
</dbReference>
<dbReference type="Gene3D" id="2.30.29.230">
    <property type="match status" value="1"/>
</dbReference>
<dbReference type="Gene3D" id="1.10.8.270">
    <property type="entry name" value="putative rabgap domain of human tbc1 domain family member 14 like domains"/>
    <property type="match status" value="1"/>
</dbReference>
<dbReference type="Gene3D" id="1.10.472.80">
    <property type="entry name" value="Ypt/Rab-GAP domain of gyp1p, domain 3"/>
    <property type="match status" value="1"/>
</dbReference>
<dbReference type="InterPro" id="IPR000195">
    <property type="entry name" value="Rab-GAP-TBC_dom"/>
</dbReference>
<dbReference type="InterPro" id="IPR035969">
    <property type="entry name" value="Rab-GAP_TBC_sf"/>
</dbReference>
<dbReference type="InterPro" id="IPR004012">
    <property type="entry name" value="Run_dom"/>
</dbReference>
<dbReference type="InterPro" id="IPR037213">
    <property type="entry name" value="Run_dom_sf"/>
</dbReference>
<dbReference type="InterPro" id="IPR047344">
    <property type="entry name" value="RUN_SGSM1"/>
</dbReference>
<dbReference type="InterPro" id="IPR037745">
    <property type="entry name" value="SGSM1/2"/>
</dbReference>
<dbReference type="InterPro" id="IPR021935">
    <property type="entry name" value="SGSM1/2_RBD"/>
</dbReference>
<dbReference type="PANTHER" id="PTHR22957:SF187">
    <property type="entry name" value="SMALL G PROTEIN SIGNALING MODULATOR 1"/>
    <property type="match status" value="1"/>
</dbReference>
<dbReference type="PANTHER" id="PTHR22957">
    <property type="entry name" value="TBC1 DOMAIN FAMILY MEMBER GTPASE-ACTIVATING PROTEIN"/>
    <property type="match status" value="1"/>
</dbReference>
<dbReference type="Pfam" id="PF12068">
    <property type="entry name" value="PH_RBD"/>
    <property type="match status" value="1"/>
</dbReference>
<dbReference type="Pfam" id="PF00566">
    <property type="entry name" value="RabGAP-TBC"/>
    <property type="match status" value="1"/>
</dbReference>
<dbReference type="Pfam" id="PF02759">
    <property type="entry name" value="RUN"/>
    <property type="match status" value="1"/>
</dbReference>
<dbReference type="SMART" id="SM00593">
    <property type="entry name" value="RUN"/>
    <property type="match status" value="1"/>
</dbReference>
<dbReference type="SMART" id="SM00164">
    <property type="entry name" value="TBC"/>
    <property type="match status" value="1"/>
</dbReference>
<dbReference type="SUPFAM" id="SSF140741">
    <property type="entry name" value="RUN domain-like"/>
    <property type="match status" value="1"/>
</dbReference>
<dbReference type="SUPFAM" id="SSF47923">
    <property type="entry name" value="Ypt/Rab-GAP domain of gyp1p"/>
    <property type="match status" value="2"/>
</dbReference>
<dbReference type="PROSITE" id="PS50826">
    <property type="entry name" value="RUN"/>
    <property type="match status" value="1"/>
</dbReference>
<dbReference type="PROSITE" id="PS50086">
    <property type="entry name" value="TBC_RABGAP"/>
    <property type="match status" value="1"/>
</dbReference>
<comment type="function">
    <text evidence="2">Interacts with numerous Rab family members, functioning as Rab effector for some, and as GTPase activator for others. Promotes GTP hydrolysis by RAB34 and RAB36. Probably functions as a GTPase effector with RAB9A and RAB9B; does not stimulate GTP hydrolysis with RAB9A and RAB9B.</text>
</comment>
<comment type="subunit">
    <text evidence="2 7">Interacts with RAB9A (GTP-bound form) and RAB9B (PubMed:25220469). Interacts with RAB3A, RAB4A, RAB5A, RAB8A, RAB11A, RAP1A, RAP1B, RAP2A and RAP2B. No interaction with RAB27A (By similarity).</text>
</comment>
<comment type="interaction">
    <interactant intactId="EBI-16121756">
        <id>Q8BPQ7-1</id>
    </interactant>
    <interactant intactId="EBI-6552247">
        <id>Q9R0M6</id>
        <label>Rab9a</label>
    </interactant>
    <organismsDiffer>false</organismsDiffer>
    <experiments>8</experiments>
</comment>
<comment type="interaction">
    <interactant intactId="EBI-16121756">
        <id>Q8BPQ7-1</id>
    </interactant>
    <interactant intactId="EBI-11568845">
        <id>Q8BHH2</id>
        <label>Rab9b</label>
    </interactant>
    <organismsDiffer>false</organismsDiffer>
    <experiments>3</experiments>
</comment>
<comment type="subcellular location">
    <subcellularLocation>
        <location evidence="6">Golgi apparatus</location>
        <location evidence="6">trans-Golgi network</location>
    </subcellularLocation>
    <subcellularLocation>
        <location evidence="7">Cytoplasm</location>
    </subcellularLocation>
    <subcellularLocation>
        <location evidence="7">Cytoplasmic vesicle membrane</location>
        <topology evidence="7">Peripheral membrane protein</topology>
    </subcellularLocation>
    <text evidence="7">Recruited to cytoplasmic vesicle membranes via its interaction with Rab family members, such as RAB9A.</text>
</comment>
<comment type="alternative products">
    <event type="alternative splicing"/>
    <isoform>
        <id>Q8BPQ7-1</id>
        <name>1</name>
        <sequence type="displayed"/>
    </isoform>
    <isoform>
        <id>Q8BPQ7-2</id>
        <name>2</name>
        <sequence type="described" ref="VSP_024669 VSP_024670"/>
    </isoform>
</comment>
<comment type="tissue specificity">
    <text evidence="6">Expressed only in brain.</text>
</comment>
<comment type="similarity">
    <text evidence="9">Belongs to the RUTBC family.</text>
</comment>